<feature type="chain" id="PRO_0000213688" description="Zinc transporter SLC39A7">
    <location>
        <begin position="1"/>
        <end position="469"/>
    </location>
</feature>
<feature type="transmembrane region" description="Helical" evidence="2">
    <location>
        <begin position="10"/>
        <end position="30"/>
    </location>
</feature>
<feature type="transmembrane region" description="Helical" evidence="2">
    <location>
        <begin position="138"/>
        <end position="158"/>
    </location>
</feature>
<feature type="transmembrane region" description="Helical" evidence="2">
    <location>
        <begin position="169"/>
        <end position="189"/>
    </location>
</feature>
<feature type="transmembrane region" description="Helical" evidence="2">
    <location>
        <begin position="214"/>
        <end position="234"/>
    </location>
</feature>
<feature type="transmembrane region" description="Helical" evidence="2">
    <location>
        <begin position="381"/>
        <end position="401"/>
    </location>
</feature>
<feature type="transmembrane region" description="Helical" evidence="2">
    <location>
        <begin position="417"/>
        <end position="436"/>
    </location>
</feature>
<feature type="region of interest" description="Disordered" evidence="3">
    <location>
        <begin position="42"/>
        <end position="121"/>
    </location>
</feature>
<feature type="region of interest" description="Disordered" evidence="3">
    <location>
        <begin position="242"/>
        <end position="310"/>
    </location>
</feature>
<feature type="compositionally biased region" description="Basic and acidic residues" evidence="3">
    <location>
        <begin position="42"/>
        <end position="56"/>
    </location>
</feature>
<feature type="compositionally biased region" description="Basic and acidic residues" evidence="3">
    <location>
        <begin position="66"/>
        <end position="114"/>
    </location>
</feature>
<feature type="compositionally biased region" description="Basic residues" evidence="3">
    <location>
        <begin position="242"/>
        <end position="263"/>
    </location>
</feature>
<feature type="compositionally biased region" description="Basic and acidic residues" evidence="3">
    <location>
        <begin position="264"/>
        <end position="285"/>
    </location>
</feature>
<feature type="modified residue" description="Pros-methylhistidine" evidence="13">
    <location>
        <position position="66"/>
    </location>
</feature>
<feature type="modified residue" description="Phosphoserine; by CK2" evidence="6 7 20">
    <location>
        <position position="275"/>
    </location>
</feature>
<feature type="modified residue" description="Phosphoserine; by CK2" evidence="6 7 20">
    <location>
        <position position="276"/>
    </location>
</feature>
<feature type="sequence variant" id="VAR_050034" description="In dbSNP:rs34211188.">
    <original>D</original>
    <variation>N</variation>
    <location>
        <position position="87"/>
    </location>
</feature>
<feature type="sequence variant" id="VAR_050035" description="In dbSNP:rs35690712.">
    <original>G</original>
    <variation>R</variation>
    <location>
        <position position="124"/>
    </location>
</feature>
<feature type="sequence variant" id="VAR_086723" description="In AGM9; decreased zinc ion transporter activity; does not affect localization to endoplasmic reticulum." evidence="10">
    <original>P</original>
    <variation>A</variation>
    <location>
        <position position="190"/>
    </location>
</feature>
<feature type="sequence variant" id="VAR_086724" description="In AGM9." evidence="10">
    <original>L</original>
    <variation>P</variation>
    <location>
        <position position="217"/>
    </location>
</feature>
<feature type="sequence variant" id="VAR_050036" description="In dbSNP:rs1048778." evidence="14 15">
    <original>E</original>
    <variation>G</variation>
    <location>
        <position position="280"/>
    </location>
</feature>
<feature type="sequence variant" id="VAR_086725" description="In AGM9; decreased zinc ion transporter activity; does not affect localization to endoplasmic reticulum." evidence="10">
    <original>E</original>
    <variation>K</variation>
    <location>
        <position position="363"/>
    </location>
</feature>
<feature type="sequence variant" id="VAR_086726" description="In AGM9." evidence="10">
    <location>
        <begin position="372"/>
        <end position="469"/>
    </location>
</feature>
<feature type="sequence variant" id="VAR_086727" description="In AGM9; uncertain significance." evidence="10">
    <original>T</original>
    <variation>I</variation>
    <location>
        <position position="395"/>
    </location>
</feature>
<feature type="sequence variant" id="VAR_086728" description="In AGM9; uncertain significance." evidence="10">
    <location>
        <begin position="451"/>
        <end position="469"/>
    </location>
</feature>
<feature type="sequence variant" id="VAR_086729" description="In AGM9; uncertain significance." evidence="10">
    <original>G</original>
    <variation>A</variation>
    <location>
        <position position="458"/>
    </location>
</feature>
<feature type="mutagenesis site" description="Loss of phosphorylation in response to Zn(2+) treatment and of cytosolic Zn(2+) release; when associated with A-276." evidence="6 7">
    <original>S</original>
    <variation>A</variation>
    <location>
        <position position="275"/>
    </location>
</feature>
<feature type="mutagenesis site" description="Loss of phosphorylation in response to Zn(2+) treatment and of cytosolic Zn(2+) release; when associated with A-275." evidence="6 7">
    <original>S</original>
    <variation>A</variation>
    <location>
        <position position="276"/>
    </location>
</feature>
<feature type="mutagenesis site" description="Loss of phosphorylation in response to Zn(2+) treatment and of cytosolic Zn(2+) release." evidence="7">
    <original>S</original>
    <variation>A</variation>
    <location>
        <position position="293"/>
    </location>
</feature>
<feature type="mutagenesis site" description="Loss of phosphorylation in response to Zn(2+) treatment and of cytosolic Zn(2+) release." evidence="7">
    <original>T</original>
    <variation>A</variation>
    <location>
        <position position="294"/>
    </location>
</feature>
<feature type="sequence conflict" description="In Ref. 1; BAA11528 and 2; AAD12305." evidence="18" ref="1 2">
    <original>A</original>
    <variation>G</variation>
    <location>
        <position position="7"/>
    </location>
</feature>
<feature type="sequence conflict" description="In Ref. 1; BAA11528 and 2; AAD12305." evidence="18" ref="1 2">
    <original>S</original>
    <variation>T</variation>
    <location>
        <position position="376"/>
    </location>
</feature>
<feature type="sequence conflict" description="In Ref. 1; BAA11528 and 2; AAD12305." evidence="18" ref="1 2">
    <original>CALLTEGGAVGSEIAGGAGPGWVLPFTAGGFIYVATVSVLPELLREASPLQSLLEVLGLLGGVIMMVLIAHLE</original>
    <variation>VPFSLKEEQWTVKLQVVQVLAGSCHLLQVALST</variation>
    <location>
        <begin position="397"/>
        <end position="469"/>
    </location>
</feature>
<dbReference type="EMBL" id="D82060">
    <property type="protein sequence ID" value="BAA11528.1"/>
    <property type="molecule type" value="mRNA"/>
</dbReference>
<dbReference type="EMBL" id="AF117221">
    <property type="protein sequence ID" value="AAD12305.1"/>
    <property type="molecule type" value="Genomic_DNA"/>
</dbReference>
<dbReference type="EMBL" id="AL031228">
    <property type="protein sequence ID" value="CAA20238.1"/>
    <property type="molecule type" value="Genomic_DNA"/>
</dbReference>
<dbReference type="EMBL" id="AL645940">
    <property type="status" value="NOT_ANNOTATED_CDS"/>
    <property type="molecule type" value="Genomic_DNA"/>
</dbReference>
<dbReference type="EMBL" id="AL662824">
    <property type="status" value="NOT_ANNOTATED_CDS"/>
    <property type="molecule type" value="Genomic_DNA"/>
</dbReference>
<dbReference type="EMBL" id="AL844527">
    <property type="status" value="NOT_ANNOTATED_CDS"/>
    <property type="molecule type" value="Genomic_DNA"/>
</dbReference>
<dbReference type="EMBL" id="CR759786">
    <property type="status" value="NOT_ANNOTATED_CDS"/>
    <property type="molecule type" value="Genomic_DNA"/>
</dbReference>
<dbReference type="EMBL" id="CR936877">
    <property type="status" value="NOT_ANNOTATED_CDS"/>
    <property type="molecule type" value="Genomic_DNA"/>
</dbReference>
<dbReference type="EMBL" id="CR759733">
    <property type="status" value="NOT_ANNOTATED_CDS"/>
    <property type="molecule type" value="Genomic_DNA"/>
</dbReference>
<dbReference type="EMBL" id="CR354565">
    <property type="status" value="NOT_ANNOTATED_CDS"/>
    <property type="molecule type" value="Genomic_DNA"/>
</dbReference>
<dbReference type="EMBL" id="CH471081">
    <property type="protein sequence ID" value="EAX03680.1"/>
    <property type="molecule type" value="Genomic_DNA"/>
</dbReference>
<dbReference type="EMBL" id="BC000645">
    <property type="protein sequence ID" value="AAH00645.1"/>
    <property type="molecule type" value="mRNA"/>
</dbReference>
<dbReference type="CCDS" id="CCDS43453.1"/>
<dbReference type="RefSeq" id="NP_001070984.1">
    <property type="nucleotide sequence ID" value="NM_001077516.2"/>
</dbReference>
<dbReference type="RefSeq" id="NP_001275706.1">
    <property type="nucleotide sequence ID" value="NM_001288777.1"/>
</dbReference>
<dbReference type="RefSeq" id="NP_008910.2">
    <property type="nucleotide sequence ID" value="NM_006979.3"/>
</dbReference>
<dbReference type="PDB" id="8GZE">
    <property type="method" value="X-ray"/>
    <property type="resolution" value="3.40 A"/>
    <property type="chains" value="D/E=65-69"/>
</dbReference>
<dbReference type="PDBsum" id="8GZE"/>
<dbReference type="SMR" id="Q92504"/>
<dbReference type="BioGRID" id="113652">
    <property type="interactions" value="214"/>
</dbReference>
<dbReference type="FunCoup" id="Q92504">
    <property type="interactions" value="1459"/>
</dbReference>
<dbReference type="IntAct" id="Q92504">
    <property type="interactions" value="104"/>
</dbReference>
<dbReference type="MINT" id="Q92504"/>
<dbReference type="STRING" id="9606.ENSP00000363809"/>
<dbReference type="DrugBank" id="DB14533">
    <property type="generic name" value="Zinc chloride"/>
</dbReference>
<dbReference type="DrugBank" id="DB14548">
    <property type="generic name" value="Zinc sulfate, unspecified form"/>
</dbReference>
<dbReference type="TCDB" id="2.A.5.4.3">
    <property type="family name" value="the zinc (zn(2+))-iron (fe(2+)) permease (zip) family"/>
</dbReference>
<dbReference type="GlyGen" id="Q92504">
    <property type="glycosylation" value="1 site, 1 O-linked glycan (1 site)"/>
</dbReference>
<dbReference type="iPTMnet" id="Q92504"/>
<dbReference type="PhosphoSitePlus" id="Q92504"/>
<dbReference type="SwissPalm" id="Q92504"/>
<dbReference type="BioMuta" id="SLC39A7"/>
<dbReference type="DMDM" id="12643344"/>
<dbReference type="jPOST" id="Q92504"/>
<dbReference type="MassIVE" id="Q92504"/>
<dbReference type="PaxDb" id="9606-ENSP00000363809"/>
<dbReference type="PeptideAtlas" id="Q92504"/>
<dbReference type="ProteomicsDB" id="75275"/>
<dbReference type="Pumba" id="Q92504"/>
<dbReference type="Antibodypedia" id="28954">
    <property type="antibodies" value="251 antibodies from 34 providers"/>
</dbReference>
<dbReference type="DNASU" id="7922"/>
<dbReference type="Ensembl" id="ENST00000374675.7">
    <property type="protein sequence ID" value="ENSP00000363807.3"/>
    <property type="gene ID" value="ENSG00000112473.19"/>
</dbReference>
<dbReference type="Ensembl" id="ENST00000374677.8">
    <property type="protein sequence ID" value="ENSP00000363809.3"/>
    <property type="gene ID" value="ENSG00000112473.19"/>
</dbReference>
<dbReference type="Ensembl" id="ENST00000383213.8">
    <property type="protein sequence ID" value="ENSP00000372700.4"/>
    <property type="gene ID" value="ENSG00000206288.13"/>
</dbReference>
<dbReference type="Ensembl" id="ENST00000383214.8">
    <property type="protein sequence ID" value="ENSP00000372701.4"/>
    <property type="gene ID" value="ENSG00000206288.13"/>
</dbReference>
<dbReference type="Ensembl" id="ENST00000416369.6">
    <property type="protein sequence ID" value="ENSP00000403583.2"/>
    <property type="gene ID" value="ENSG00000229802.11"/>
</dbReference>
<dbReference type="Ensembl" id="ENST00000418477.6">
    <property type="protein sequence ID" value="ENSP00000416439.2"/>
    <property type="gene ID" value="ENSG00000226614.11"/>
</dbReference>
<dbReference type="Ensembl" id="ENST00000423043.6">
    <property type="protein sequence ID" value="ENSP00000389623.2"/>
    <property type="gene ID" value="ENSG00000226614.11"/>
</dbReference>
<dbReference type="Ensembl" id="ENST00000431735.6">
    <property type="protein sequence ID" value="ENSP00000410656.2"/>
    <property type="gene ID" value="ENSG00000224399.11"/>
</dbReference>
<dbReference type="Ensembl" id="ENST00000441854.6">
    <property type="protein sequence ID" value="ENSP00000391735.2"/>
    <property type="gene ID" value="ENSG00000229802.11"/>
</dbReference>
<dbReference type="Ensembl" id="ENST00000441953.6">
    <property type="protein sequence ID" value="ENSP00000413027.2"/>
    <property type="gene ID" value="ENSG00000224399.11"/>
</dbReference>
<dbReference type="Ensembl" id="ENST00000443773.6">
    <property type="protein sequence ID" value="ENSP00000407093.2"/>
    <property type="gene ID" value="ENSG00000227402.11"/>
</dbReference>
<dbReference type="Ensembl" id="ENST00000456261.6">
    <property type="protein sequence ID" value="ENSP00000414145.2"/>
    <property type="gene ID" value="ENSG00000227402.11"/>
</dbReference>
<dbReference type="GeneID" id="7922"/>
<dbReference type="KEGG" id="hsa:7922"/>
<dbReference type="MANE-Select" id="ENST00000374677.8">
    <property type="protein sequence ID" value="ENSP00000363809.3"/>
    <property type="RefSeq nucleotide sequence ID" value="NM_006979.3"/>
    <property type="RefSeq protein sequence ID" value="NP_008910.2"/>
</dbReference>
<dbReference type="UCSC" id="uc003odf.4">
    <property type="organism name" value="human"/>
</dbReference>
<dbReference type="AGR" id="HGNC:4927"/>
<dbReference type="CTD" id="7922"/>
<dbReference type="DisGeNET" id="7922"/>
<dbReference type="GeneCards" id="SLC39A7"/>
<dbReference type="HGNC" id="HGNC:4927">
    <property type="gene designation" value="SLC39A7"/>
</dbReference>
<dbReference type="HPA" id="ENSG00000112473">
    <property type="expression patterns" value="Low tissue specificity"/>
</dbReference>
<dbReference type="MalaCards" id="SLC39A7"/>
<dbReference type="MIM" id="601416">
    <property type="type" value="gene"/>
</dbReference>
<dbReference type="MIM" id="619693">
    <property type="type" value="phenotype"/>
</dbReference>
<dbReference type="neXtProt" id="NX_Q92504"/>
<dbReference type="OpenTargets" id="ENSG00000112473"/>
<dbReference type="Orphanet" id="693627">
    <property type="disease" value="Agammaglobulinemia-skin involvement-failure to thrive syndrome"/>
</dbReference>
<dbReference type="PharmGKB" id="PA29305"/>
<dbReference type="VEuPathDB" id="HostDB:ENSG00000112473"/>
<dbReference type="eggNOG" id="KOG2693">
    <property type="taxonomic scope" value="Eukaryota"/>
</dbReference>
<dbReference type="GeneTree" id="ENSGT00940000160076"/>
<dbReference type="HOGENOM" id="CLU_015114_0_1_1"/>
<dbReference type="InParanoid" id="Q92504"/>
<dbReference type="OMA" id="IWLHSIG"/>
<dbReference type="OrthoDB" id="200954at2759"/>
<dbReference type="PAN-GO" id="Q92504">
    <property type="GO annotations" value="3 GO annotations based on evolutionary models"/>
</dbReference>
<dbReference type="PhylomeDB" id="Q92504"/>
<dbReference type="TreeFam" id="TF318470"/>
<dbReference type="PathwayCommons" id="Q92504"/>
<dbReference type="Reactome" id="R-HSA-442380">
    <property type="pathway name" value="Zinc influx into cells by the SLC39 gene family"/>
</dbReference>
<dbReference type="SignaLink" id="Q92504"/>
<dbReference type="BioGRID-ORCS" id="7922">
    <property type="hits" value="646 hits in 1160 CRISPR screens"/>
</dbReference>
<dbReference type="ChiTaRS" id="SLC39A7">
    <property type="organism name" value="human"/>
</dbReference>
<dbReference type="GeneWiki" id="SLC39A7"/>
<dbReference type="GenomeRNAi" id="7922"/>
<dbReference type="Pharos" id="Q92504">
    <property type="development level" value="Tbio"/>
</dbReference>
<dbReference type="PRO" id="PR:Q92504"/>
<dbReference type="Proteomes" id="UP000005640">
    <property type="component" value="Chromosome 6"/>
</dbReference>
<dbReference type="RNAct" id="Q92504">
    <property type="molecule type" value="protein"/>
</dbReference>
<dbReference type="Bgee" id="ENSG00000112473">
    <property type="expression patterns" value="Expressed in stromal cell of endometrium and 97 other cell types or tissues"/>
</dbReference>
<dbReference type="ExpressionAtlas" id="Q92504">
    <property type="expression patterns" value="baseline and differential"/>
</dbReference>
<dbReference type="GO" id="GO:0005783">
    <property type="term" value="C:endoplasmic reticulum"/>
    <property type="evidence" value="ECO:0000314"/>
    <property type="project" value="UniProtKB"/>
</dbReference>
<dbReference type="GO" id="GO:0005789">
    <property type="term" value="C:endoplasmic reticulum membrane"/>
    <property type="evidence" value="ECO:0000314"/>
    <property type="project" value="UniProtKB"/>
</dbReference>
<dbReference type="GO" id="GO:0005794">
    <property type="term" value="C:Golgi apparatus"/>
    <property type="evidence" value="ECO:0007669"/>
    <property type="project" value="UniProtKB-SubCell"/>
</dbReference>
<dbReference type="GO" id="GO:0016020">
    <property type="term" value="C:membrane"/>
    <property type="evidence" value="ECO:0000304"/>
    <property type="project" value="ProtInc"/>
</dbReference>
<dbReference type="GO" id="GO:0005654">
    <property type="term" value="C:nucleoplasm"/>
    <property type="evidence" value="ECO:0000314"/>
    <property type="project" value="HPA"/>
</dbReference>
<dbReference type="GO" id="GO:0005385">
    <property type="term" value="F:zinc ion transmembrane transporter activity"/>
    <property type="evidence" value="ECO:0000314"/>
    <property type="project" value="UniProtKB"/>
</dbReference>
<dbReference type="GO" id="GO:0030183">
    <property type="term" value="P:B cell differentiation"/>
    <property type="evidence" value="ECO:0000315"/>
    <property type="project" value="UniProtKB"/>
</dbReference>
<dbReference type="GO" id="GO:0006882">
    <property type="term" value="P:intracellular zinc ion homeostasis"/>
    <property type="evidence" value="ECO:0000315"/>
    <property type="project" value="UniProtKB"/>
</dbReference>
<dbReference type="GO" id="GO:0110075">
    <property type="term" value="P:regulation of ferroptosis"/>
    <property type="evidence" value="ECO:0000315"/>
    <property type="project" value="UniProtKB"/>
</dbReference>
<dbReference type="GO" id="GO:0098773">
    <property type="term" value="P:skin epidermis development"/>
    <property type="evidence" value="ECO:0007669"/>
    <property type="project" value="Ensembl"/>
</dbReference>
<dbReference type="GO" id="GO:0071577">
    <property type="term" value="P:zinc ion transmembrane transport"/>
    <property type="evidence" value="ECO:0000314"/>
    <property type="project" value="UniProtKB"/>
</dbReference>
<dbReference type="InterPro" id="IPR003689">
    <property type="entry name" value="ZIP"/>
</dbReference>
<dbReference type="PANTHER" id="PTHR16950:SF25">
    <property type="entry name" value="ZINC TRANSPORTER SLC39A7"/>
    <property type="match status" value="1"/>
</dbReference>
<dbReference type="PANTHER" id="PTHR16950">
    <property type="entry name" value="ZINC TRANSPORTER SLC39A7 HISTIDINE-RICH MEMBRANE PROTEIN KE4"/>
    <property type="match status" value="1"/>
</dbReference>
<dbReference type="Pfam" id="PF02535">
    <property type="entry name" value="Zip"/>
    <property type="match status" value="1"/>
</dbReference>
<reference key="1">
    <citation type="journal article" date="1996" name="Genomics">
        <title>cDNA cloning of the human homologues of the mouse Ke4 and Ke6 genes at the centromeric end of the human MHC region.</title>
        <authorList>
            <person name="Ando A."/>
            <person name="Kikuti Y.Y."/>
            <person name="Shigenari A."/>
            <person name="Kawata H."/>
            <person name="Okamoto N."/>
            <person name="Shiina T."/>
            <person name="Chen L."/>
            <person name="Ikemura T."/>
            <person name="Abe K."/>
            <person name="Kimura M."/>
            <person name="Inoko H."/>
        </authorList>
    </citation>
    <scope>NUCLEOTIDE SEQUENCE [MRNA]</scope>
    <scope>VARIANT GLY-280</scope>
    <source>
        <tissue>Kidney</tissue>
    </source>
</reference>
<reference key="2">
    <citation type="submission" date="1998-12" db="EMBL/GenBank/DDBJ databases">
        <title>Molecular cloning and characterization of the human KE4 gene and 5' flanking region.</title>
        <authorList>
            <person name="Vergara A."/>
            <person name="Lana I."/>
            <person name="Corella A."/>
            <person name="de Miguel C."/>
            <person name="Migliaccio M."/>
            <person name="Encio I."/>
        </authorList>
    </citation>
    <scope>NUCLEOTIDE SEQUENCE [GENOMIC DNA]</scope>
    <scope>VARIANT GLY-280</scope>
</reference>
<reference key="3">
    <citation type="journal article" date="2003" name="Nature">
        <title>The DNA sequence and analysis of human chromosome 6.</title>
        <authorList>
            <person name="Mungall A.J."/>
            <person name="Palmer S.A."/>
            <person name="Sims S.K."/>
            <person name="Edwards C.A."/>
            <person name="Ashurst J.L."/>
            <person name="Wilming L."/>
            <person name="Jones M.C."/>
            <person name="Horton R."/>
            <person name="Hunt S.E."/>
            <person name="Scott C.E."/>
            <person name="Gilbert J.G.R."/>
            <person name="Clamp M.E."/>
            <person name="Bethel G."/>
            <person name="Milne S."/>
            <person name="Ainscough R."/>
            <person name="Almeida J.P."/>
            <person name="Ambrose K.D."/>
            <person name="Andrews T.D."/>
            <person name="Ashwell R.I.S."/>
            <person name="Babbage A.K."/>
            <person name="Bagguley C.L."/>
            <person name="Bailey J."/>
            <person name="Banerjee R."/>
            <person name="Barker D.J."/>
            <person name="Barlow K.F."/>
            <person name="Bates K."/>
            <person name="Beare D.M."/>
            <person name="Beasley H."/>
            <person name="Beasley O."/>
            <person name="Bird C.P."/>
            <person name="Blakey S.E."/>
            <person name="Bray-Allen S."/>
            <person name="Brook J."/>
            <person name="Brown A.J."/>
            <person name="Brown J.Y."/>
            <person name="Burford D.C."/>
            <person name="Burrill W."/>
            <person name="Burton J."/>
            <person name="Carder C."/>
            <person name="Carter N.P."/>
            <person name="Chapman J.C."/>
            <person name="Clark S.Y."/>
            <person name="Clark G."/>
            <person name="Clee C.M."/>
            <person name="Clegg S."/>
            <person name="Cobley V."/>
            <person name="Collier R.E."/>
            <person name="Collins J.E."/>
            <person name="Colman L.K."/>
            <person name="Corby N.R."/>
            <person name="Coville G.J."/>
            <person name="Culley K.M."/>
            <person name="Dhami P."/>
            <person name="Davies J."/>
            <person name="Dunn M."/>
            <person name="Earthrowl M.E."/>
            <person name="Ellington A.E."/>
            <person name="Evans K.A."/>
            <person name="Faulkner L."/>
            <person name="Francis M.D."/>
            <person name="Frankish A."/>
            <person name="Frankland J."/>
            <person name="French L."/>
            <person name="Garner P."/>
            <person name="Garnett J."/>
            <person name="Ghori M.J."/>
            <person name="Gilby L.M."/>
            <person name="Gillson C.J."/>
            <person name="Glithero R.J."/>
            <person name="Grafham D.V."/>
            <person name="Grant M."/>
            <person name="Gribble S."/>
            <person name="Griffiths C."/>
            <person name="Griffiths M.N.D."/>
            <person name="Hall R."/>
            <person name="Halls K.S."/>
            <person name="Hammond S."/>
            <person name="Harley J.L."/>
            <person name="Hart E.A."/>
            <person name="Heath P.D."/>
            <person name="Heathcott R."/>
            <person name="Holmes S.J."/>
            <person name="Howden P.J."/>
            <person name="Howe K.L."/>
            <person name="Howell G.R."/>
            <person name="Huckle E."/>
            <person name="Humphray S.J."/>
            <person name="Humphries M.D."/>
            <person name="Hunt A.R."/>
            <person name="Johnson C.M."/>
            <person name="Joy A.A."/>
            <person name="Kay M."/>
            <person name="Keenan S.J."/>
            <person name="Kimberley A.M."/>
            <person name="King A."/>
            <person name="Laird G.K."/>
            <person name="Langford C."/>
            <person name="Lawlor S."/>
            <person name="Leongamornlert D.A."/>
            <person name="Leversha M."/>
            <person name="Lloyd C.R."/>
            <person name="Lloyd D.M."/>
            <person name="Loveland J.E."/>
            <person name="Lovell J."/>
            <person name="Martin S."/>
            <person name="Mashreghi-Mohammadi M."/>
            <person name="Maslen G.L."/>
            <person name="Matthews L."/>
            <person name="McCann O.T."/>
            <person name="McLaren S.J."/>
            <person name="McLay K."/>
            <person name="McMurray A."/>
            <person name="Moore M.J.F."/>
            <person name="Mullikin J.C."/>
            <person name="Niblett D."/>
            <person name="Nickerson T."/>
            <person name="Novik K.L."/>
            <person name="Oliver K."/>
            <person name="Overton-Larty E.K."/>
            <person name="Parker A."/>
            <person name="Patel R."/>
            <person name="Pearce A.V."/>
            <person name="Peck A.I."/>
            <person name="Phillimore B.J.C.T."/>
            <person name="Phillips S."/>
            <person name="Plumb R.W."/>
            <person name="Porter K.M."/>
            <person name="Ramsey Y."/>
            <person name="Ranby S.A."/>
            <person name="Rice C.M."/>
            <person name="Ross M.T."/>
            <person name="Searle S.M."/>
            <person name="Sehra H.K."/>
            <person name="Sheridan E."/>
            <person name="Skuce C.D."/>
            <person name="Smith S."/>
            <person name="Smith M."/>
            <person name="Spraggon L."/>
            <person name="Squares S.L."/>
            <person name="Steward C.A."/>
            <person name="Sycamore N."/>
            <person name="Tamlyn-Hall G."/>
            <person name="Tester J."/>
            <person name="Theaker A.J."/>
            <person name="Thomas D.W."/>
            <person name="Thorpe A."/>
            <person name="Tracey A."/>
            <person name="Tromans A."/>
            <person name="Tubby B."/>
            <person name="Wall M."/>
            <person name="Wallis J.M."/>
            <person name="West A.P."/>
            <person name="White S.S."/>
            <person name="Whitehead S.L."/>
            <person name="Whittaker H."/>
            <person name="Wild A."/>
            <person name="Willey D.J."/>
            <person name="Wilmer T.E."/>
            <person name="Wood J.M."/>
            <person name="Wray P.W."/>
            <person name="Wyatt J.C."/>
            <person name="Young L."/>
            <person name="Younger R.M."/>
            <person name="Bentley D.R."/>
            <person name="Coulson A."/>
            <person name="Durbin R.M."/>
            <person name="Hubbard T."/>
            <person name="Sulston J.E."/>
            <person name="Dunham I."/>
            <person name="Rogers J."/>
            <person name="Beck S."/>
        </authorList>
    </citation>
    <scope>NUCLEOTIDE SEQUENCE [LARGE SCALE GENOMIC DNA]</scope>
</reference>
<reference key="4">
    <citation type="submission" date="2005-07" db="EMBL/GenBank/DDBJ databases">
        <authorList>
            <person name="Mural R.J."/>
            <person name="Istrail S."/>
            <person name="Sutton G.G."/>
            <person name="Florea L."/>
            <person name="Halpern A.L."/>
            <person name="Mobarry C.M."/>
            <person name="Lippert R."/>
            <person name="Walenz B."/>
            <person name="Shatkay H."/>
            <person name="Dew I."/>
            <person name="Miller J.R."/>
            <person name="Flanigan M.J."/>
            <person name="Edwards N.J."/>
            <person name="Bolanos R."/>
            <person name="Fasulo D."/>
            <person name="Halldorsson B.V."/>
            <person name="Hannenhalli S."/>
            <person name="Turner R."/>
            <person name="Yooseph S."/>
            <person name="Lu F."/>
            <person name="Nusskern D.R."/>
            <person name="Shue B.C."/>
            <person name="Zheng X.H."/>
            <person name="Zhong F."/>
            <person name="Delcher A.L."/>
            <person name="Huson D.H."/>
            <person name="Kravitz S.A."/>
            <person name="Mouchard L."/>
            <person name="Reinert K."/>
            <person name="Remington K.A."/>
            <person name="Clark A.G."/>
            <person name="Waterman M.S."/>
            <person name="Eichler E.E."/>
            <person name="Adams M.D."/>
            <person name="Hunkapiller M.W."/>
            <person name="Myers E.W."/>
            <person name="Venter J.C."/>
        </authorList>
    </citation>
    <scope>NUCLEOTIDE SEQUENCE [LARGE SCALE GENOMIC DNA]</scope>
</reference>
<reference key="5">
    <citation type="journal article" date="2004" name="Genome Res.">
        <title>The status, quality, and expansion of the NIH full-length cDNA project: the Mammalian Gene Collection (MGC).</title>
        <authorList>
            <consortium name="The MGC Project Team"/>
        </authorList>
    </citation>
    <scope>NUCLEOTIDE SEQUENCE [LARGE SCALE MRNA]</scope>
    <source>
        <tissue>Skin</tissue>
    </source>
</reference>
<reference key="6">
    <citation type="journal article" date="2004" name="Biochem. J.">
        <title>Structure-function analysis of HKE4, a member of the new LIV-1 subfamily of zinc transporters.</title>
        <authorList>
            <person name="Taylor K.M."/>
            <person name="Morgan H.E."/>
            <person name="Johnson A."/>
            <person name="Nicholson R.I."/>
        </authorList>
    </citation>
    <scope>FUNCTION</scope>
    <scope>TRANSPORTER ACTIVITY</scope>
    <scope>SUBCELLULAR LOCATION</scope>
    <scope>TISSUE SPECIFICITY</scope>
</reference>
<reference key="7">
    <citation type="journal article" date="2005" name="J. Biol. Chem.">
        <title>The ZIP7 gene (Slc39a7) encodes a zinc transporter involved in zinc homeostasis of the Golgi apparatus.</title>
        <authorList>
            <person name="Huang L."/>
            <person name="Kirschke C.P."/>
            <person name="Zhang Y."/>
            <person name="Yu Y.Y."/>
        </authorList>
    </citation>
    <scope>FUNCTION</scope>
    <scope>TRANSPORTER ACTIVITY</scope>
    <scope>SUBCELLULAR LOCATION</scope>
    <scope>TISSUE SPECIFICITY</scope>
    <scope>INDUCTION</scope>
</reference>
<reference key="8">
    <citation type="journal article" date="2008" name="J. Proteome Res.">
        <title>Phosphoproteome of resting human platelets.</title>
        <authorList>
            <person name="Zahedi R.P."/>
            <person name="Lewandrowski U."/>
            <person name="Wiesner J."/>
            <person name="Wortelkamp S."/>
            <person name="Moebius J."/>
            <person name="Schuetz C."/>
            <person name="Walter U."/>
            <person name="Gambaryan S."/>
            <person name="Sickmann A."/>
        </authorList>
    </citation>
    <scope>IDENTIFICATION BY MASS SPECTROMETRY [LARGE SCALE ANALYSIS]</scope>
    <source>
        <tissue>Platelet</tissue>
    </source>
</reference>
<reference key="9">
    <citation type="journal article" date="2010" name="Sci. Signal.">
        <title>Quantitative phosphoproteomics reveals widespread full phosphorylation site occupancy during mitosis.</title>
        <authorList>
            <person name="Olsen J.V."/>
            <person name="Vermeulen M."/>
            <person name="Santamaria A."/>
            <person name="Kumar C."/>
            <person name="Miller M.L."/>
            <person name="Jensen L.J."/>
            <person name="Gnad F."/>
            <person name="Cox J."/>
            <person name="Jensen T.S."/>
            <person name="Nigg E.A."/>
            <person name="Brunak S."/>
            <person name="Mann M."/>
        </authorList>
    </citation>
    <scope>PHOSPHORYLATION [LARGE SCALE ANALYSIS] AT SER-275 AND SER-276</scope>
    <scope>IDENTIFICATION BY MASS SPECTROMETRY [LARGE SCALE ANALYSIS]</scope>
    <source>
        <tissue>Cervix carcinoma</tissue>
    </source>
</reference>
<reference key="10">
    <citation type="journal article" date="2012" name="Sci. Signal.">
        <title>Protein kinase CK2 triggers cytosolic zinc signaling pathways by phosphorylation of zinc channel ZIP7.</title>
        <authorList>
            <person name="Taylor K.M."/>
            <person name="Hiscox S."/>
            <person name="Nicholson R.I."/>
            <person name="Hogstrand C."/>
            <person name="Kille P."/>
        </authorList>
    </citation>
    <scope>FUNCTION</scope>
    <scope>PHOSPHORYLATION AT SER-275 AND SER-276</scope>
    <scope>MUTAGENESIS OF SER-275 AND SER-276</scope>
    <scope>SUBUNIT</scope>
</reference>
<reference key="11">
    <citation type="journal article" date="2014" name="J. Proteomics">
        <title>An enzyme assisted RP-RPLC approach for in-depth analysis of human liver phosphoproteome.</title>
        <authorList>
            <person name="Bian Y."/>
            <person name="Song C."/>
            <person name="Cheng K."/>
            <person name="Dong M."/>
            <person name="Wang F."/>
            <person name="Huang J."/>
            <person name="Sun D."/>
            <person name="Wang L."/>
            <person name="Ye M."/>
            <person name="Zou H."/>
        </authorList>
    </citation>
    <scope>IDENTIFICATION BY MASS SPECTROMETRY [LARGE SCALE ANALYSIS]</scope>
    <source>
        <tissue>Liver</tissue>
    </source>
</reference>
<reference key="12">
    <citation type="journal article" date="2015" name="Proteomics">
        <title>N-terminome analysis of the human mitochondrial proteome.</title>
        <authorList>
            <person name="Vaca Jacome A.S."/>
            <person name="Rabilloud T."/>
            <person name="Schaeffer-Reiss C."/>
            <person name="Rompais M."/>
            <person name="Ayoub D."/>
            <person name="Lane L."/>
            <person name="Bairoch A."/>
            <person name="Van Dorsselaer A."/>
            <person name="Carapito C."/>
        </authorList>
    </citation>
    <scope>IDENTIFICATION BY MASS SPECTROMETRY [LARGE SCALE ANALYSIS]</scope>
</reference>
<reference key="13">
    <citation type="journal article" date="2017" name="Metallomics">
        <title>Phosphorylation of zinc channel ZIP7 drives MAPK, PI3K and mTOR growth and proliferation signalling.</title>
        <authorList>
            <person name="Nimmanon T."/>
            <person name="Ziliotto S."/>
            <person name="Morris S."/>
            <person name="Flanagan L."/>
            <person name="Taylor K.M."/>
        </authorList>
    </citation>
    <scope>FUNCTION</scope>
    <scope>TRANSPORTER ACTIVITY</scope>
    <scope>ACTIVITY REGULATION</scope>
    <scope>PHOSPHORYLATION AT SER-275 AND SER-276</scope>
    <scope>MUTAGENESIS OF SER-275; SER-276; SER-293 AND THR-294</scope>
</reference>
<reference key="14">
    <citation type="journal article" date="2018" name="Mol. Pharmacol.">
        <title>The Zinc Transporter SLC39A7 (ZIP7) Is Essential for Regulation of Cytosolic Zinc Levels.</title>
        <authorList>
            <person name="Woodruff G."/>
            <person name="Bouwkamp C.G."/>
            <person name="de Vrij F.M."/>
            <person name="Lovenberg T."/>
            <person name="Bonaventure P."/>
            <person name="Kushner S.A."/>
            <person name="Harrington A.W."/>
        </authorList>
    </citation>
    <scope>FUNCTION</scope>
    <scope>TRANSPORTER ACTIVITY</scope>
    <scope>SUBCELLULAR LOCATION</scope>
</reference>
<reference key="15">
    <citation type="journal article" date="2019" name="Cell Death Differ.">
        <title>Systematic genetic mapping of necroptosis identifies SLC39A7 as modulator of death receptor trafficking.</title>
        <authorList>
            <person name="Fauster A."/>
            <person name="Rebsamen M."/>
            <person name="Willmann K.L."/>
            <person name="Cesar-Razquin A."/>
            <person name="Girardi E."/>
            <person name="Bigenzahn J.W."/>
            <person name="Schischlik F."/>
            <person name="Scorzoni S."/>
            <person name="Bruckner M."/>
            <person name="Konecka J."/>
            <person name="Hoermann K."/>
            <person name="Heinz L.X."/>
            <person name="Boztug K."/>
            <person name="Superti-Furga G."/>
        </authorList>
    </citation>
    <scope>FUNCTION</scope>
    <scope>SUBCELLULAR LOCATION</scope>
</reference>
<reference key="16">
    <citation type="journal article" date="2021" name="Nat. Commun.">
        <title>The methyltransferase METTL9 mediates pervasive 1-methylhistidine modification in mammalian proteomes.</title>
        <authorList>
            <person name="Davydova E."/>
            <person name="Shimazu T."/>
            <person name="Schuhmacher M.K."/>
            <person name="Jakobsson M.E."/>
            <person name="Willemen H.L.D.M."/>
            <person name="Liu T."/>
            <person name="Moen A."/>
            <person name="Ho A.Y.Y."/>
            <person name="Malecki J."/>
            <person name="Schroer L."/>
            <person name="Pinto R."/>
            <person name="Suzuki T."/>
            <person name="Groensberg I.A."/>
            <person name="Sohtome Y."/>
            <person name="Akakabe M."/>
            <person name="Weirich S."/>
            <person name="Kikuchi M."/>
            <person name="Olsen J.V."/>
            <person name="Dohmae N."/>
            <person name="Umehara T."/>
            <person name="Sodeoka M."/>
            <person name="Siino V."/>
            <person name="McDonough M.A."/>
            <person name="Eijkelkamp N."/>
            <person name="Schofield C.J."/>
            <person name="Jeltsch A."/>
            <person name="Shinkai Y."/>
            <person name="Falnes P.O."/>
        </authorList>
    </citation>
    <scope>METHYLATION</scope>
</reference>
<reference key="17">
    <citation type="journal article" date="2019" name="Nat. Immunol.">
        <title>An essential role for the Zn2+ transporter ZIP7 in B cell development.</title>
        <authorList>
            <person name="Anzilotti C."/>
            <person name="Swan D.J."/>
            <person name="Boisson B."/>
            <person name="Deobagkar-Lele M."/>
            <person name="Oliveira C."/>
            <person name="Chabosseau P."/>
            <person name="Engelhardt K.R."/>
            <person name="Xu X."/>
            <person name="Chen R."/>
            <person name="Alvarez L."/>
            <person name="Berlinguer-Palmini R."/>
            <person name="Bull K.R."/>
            <person name="Cawthorne E."/>
            <person name="Cribbs A.P."/>
            <person name="Crockford T.L."/>
            <person name="Dang T.S."/>
            <person name="Fearn A."/>
            <person name="Fenech E.J."/>
            <person name="de Jong S.J."/>
            <person name="Lagerholm B.C."/>
            <person name="Ma C.S."/>
            <person name="Sims D."/>
            <person name="van den Berg B."/>
            <person name="Xu Y."/>
            <person name="Cant A.J."/>
            <person name="Kleiner G."/>
            <person name="Leahy T.R."/>
            <person name="de la Morena M.T."/>
            <person name="Puck J.M."/>
            <person name="Shapiro R.S."/>
            <person name="van der Burg M."/>
            <person name="Chapman J.R."/>
            <person name="Christianson J.C."/>
            <person name="Davies B."/>
            <person name="McGrath J.A."/>
            <person name="Przyborski S."/>
            <person name="Santibanez Koref M."/>
            <person name="Tangye S.G."/>
            <person name="Werner A."/>
            <person name="Rutter G.A."/>
            <person name="Padilla-Parra S."/>
            <person name="Casanova J.L."/>
            <person name="Cornall R.J."/>
            <person name="Conley M.E."/>
            <person name="Hambleton S."/>
        </authorList>
    </citation>
    <scope>VARIANTS AGM9 ALA-190; PRO-217; LYS-363; 372-GLN--GLU-469 DEL; ILE-395; 451-GLU--GLU-469 DEL AND ALA-458</scope>
    <scope>CHARACTERIZATION OF VARIANTS AGM9 ALA-190 AND LYS-363</scope>
    <scope>FUNCTION</scope>
    <scope>SUBCELLULAR LOCATION</scope>
</reference>
<reference key="18">
    <citation type="journal article" date="2021" name="Cell Death Dis.">
        <title>Zinc transporter ZIP7 is a novel determinant of ferroptosis.</title>
        <authorList>
            <person name="Chen P.H."/>
            <person name="Wu J."/>
            <person name="Xu Y."/>
            <person name="Ding C.C."/>
            <person name="Mestre A.A."/>
            <person name="Lin C.C."/>
            <person name="Yang W.H."/>
            <person name="Chi J.T."/>
        </authorList>
    </citation>
    <scope>FUNCTION</scope>
</reference>
<reference evidence="19" key="19">
    <citation type="journal article" date="2023" name="Cell Insight">
        <title>Molecular basis for protein histidine N1-specific methylation of the 'His-x-His' motifs by METTL9.</title>
        <authorList>
            <person name="Zhao W."/>
            <person name="Zhou Y."/>
            <person name="Li C."/>
            <person name="Bi Y."/>
            <person name="Wang K."/>
            <person name="Ye M."/>
            <person name="Li H."/>
        </authorList>
    </citation>
    <scope>X-RAY CRYSTALLOGRAPHY (2.50 ANGSTROMS) OF 65-69 IN COMPLEX WITH METTL9</scope>
    <scope>METHYLATION AT HIS-66</scope>
</reference>
<organism>
    <name type="scientific">Homo sapiens</name>
    <name type="common">Human</name>
    <dbReference type="NCBI Taxonomy" id="9606"/>
    <lineage>
        <taxon>Eukaryota</taxon>
        <taxon>Metazoa</taxon>
        <taxon>Chordata</taxon>
        <taxon>Craniata</taxon>
        <taxon>Vertebrata</taxon>
        <taxon>Euteleostomi</taxon>
        <taxon>Mammalia</taxon>
        <taxon>Eutheria</taxon>
        <taxon>Euarchontoglires</taxon>
        <taxon>Primates</taxon>
        <taxon>Haplorrhini</taxon>
        <taxon>Catarrhini</taxon>
        <taxon>Hominidae</taxon>
        <taxon>Homo</taxon>
    </lineage>
</organism>
<comment type="function">
    <text evidence="1 4 5 6 7 8 9 10 12">Transports Zn(2+) from the endoplasmic reticulum (ER)/Golgi apparatus to the cytosol, playing an essential role in the regulation of cytosolic zinc levels (PubMed:14525538, PubMed:15705588, PubMed:28205653, PubMed:29980658). Acts as a gatekeeper of zinc release from intracellular stores, requiring post-translational activation by phosphorylation, resulting in activation of multiple downstream pathways leading to cell growth and proliferation (PubMed:22317921, PubMed:28205653, PubMed:29980658). Has an essential role in B cell development and is required for proper B cell receptor signaling (PubMed:30718914). Plays an important role in maintaining intestinal epithelial homeostasis and skin dermis development by regulating ER function (By similarity). Controls cell signaling pathways involved in glucose metabolism in skeletal muscle (By similarity). Has a protective role against ER stress in different biological contexts (PubMed:29980658, PubMed:30237509). Mediates Zn(2+)-induced ferroptosis (PubMed:33608508).</text>
</comment>
<comment type="catalytic activity">
    <reaction evidence="4 5 7 8">
        <text>Zn(2+)(in) = Zn(2+)(out)</text>
        <dbReference type="Rhea" id="RHEA:29351"/>
        <dbReference type="ChEBI" id="CHEBI:29105"/>
    </reaction>
</comment>
<comment type="activity regulation">
    <text evidence="6 7">Phosphorylation activates zinc transport activity.</text>
</comment>
<comment type="subunit">
    <text evidence="6">Homodimer.</text>
</comment>
<comment type="interaction">
    <interactant intactId="EBI-1051105">
        <id>Q92504</id>
    </interactant>
    <interactant intactId="EBI-13059134">
        <id>Q13520</id>
        <label>AQP6</label>
    </interactant>
    <organismsDiffer>false</organismsDiffer>
    <experiments>3</experiments>
</comment>
<comment type="interaction">
    <interactant intactId="EBI-1051105">
        <id>Q92504</id>
    </interactant>
    <interactant intactId="EBI-700794">
        <id>Q13323</id>
        <label>BIK</label>
    </interactant>
    <organismsDiffer>false</organismsDiffer>
    <experiments>3</experiments>
</comment>
<comment type="interaction">
    <interactant intactId="EBI-1051105">
        <id>Q92504</id>
    </interactant>
    <interactant intactId="EBI-713677">
        <id>Q9UGL9</id>
        <label>CRCT1</label>
    </interactant>
    <organismsDiffer>false</organismsDiffer>
    <experiments>3</experiments>
</comment>
<comment type="interaction">
    <interactant intactId="EBI-1051105">
        <id>Q92504</id>
    </interactant>
    <interactant intactId="EBI-347804">
        <id>P68400</id>
        <label>CSNK2A1</label>
    </interactant>
    <organismsDiffer>false</organismsDiffer>
    <experiments>4</experiments>
</comment>
<comment type="interaction">
    <interactant intactId="EBI-1051105">
        <id>Q92504</id>
    </interactant>
    <interactant intactId="EBI-17458373">
        <id>P48165</id>
        <label>GJA8</label>
    </interactant>
    <organismsDiffer>false</organismsDiffer>
    <experiments>3</experiments>
</comment>
<comment type="interaction">
    <interactant intactId="EBI-1051105">
        <id>Q92504</id>
    </interactant>
    <interactant intactId="EBI-6918743">
        <id>Q9H3M0</id>
        <label>KCNF1</label>
    </interactant>
    <organismsDiffer>false</organismsDiffer>
    <experiments>3</experiments>
</comment>
<comment type="interaction">
    <interactant intactId="EBI-1051105">
        <id>Q92504</id>
    </interactant>
    <interactant intactId="EBI-11749135">
        <id>Q8IUG1</id>
        <label>KRTAP1-3</label>
    </interactant>
    <organismsDiffer>false</organismsDiffer>
    <experiments>3</experiments>
</comment>
<comment type="interaction">
    <interactant intactId="EBI-1051105">
        <id>Q92504</id>
    </interactant>
    <interactant intactId="EBI-11987425">
        <id>Q6L8G8</id>
        <label>KRTAP5-7</label>
    </interactant>
    <organismsDiffer>false</organismsDiffer>
    <experiments>3</experiments>
</comment>
<comment type="interaction">
    <interactant intactId="EBI-1051105">
        <id>Q92504</id>
    </interactant>
    <interactant intactId="EBI-1044640">
        <id>Q9BYQ4</id>
        <label>KRTAP9-2</label>
    </interactant>
    <organismsDiffer>false</organismsDiffer>
    <experiments>3</experiments>
</comment>
<comment type="interaction">
    <interactant intactId="EBI-1051105">
        <id>Q92504</id>
    </interactant>
    <interactant intactId="EBI-11962058">
        <id>Q5T7P2</id>
        <label>LCE1A</label>
    </interactant>
    <organismsDiffer>false</organismsDiffer>
    <experiments>3</experiments>
</comment>
<comment type="interaction">
    <interactant intactId="EBI-1051105">
        <id>Q92504</id>
    </interactant>
    <interactant intactId="EBI-12224199">
        <id>Q5T751</id>
        <label>LCE1C</label>
    </interactant>
    <organismsDiffer>false</organismsDiffer>
    <experiments>3</experiments>
</comment>
<comment type="interaction">
    <interactant intactId="EBI-1051105">
        <id>Q92504</id>
    </interactant>
    <interactant intactId="EBI-11958008">
        <id>Q5T754</id>
        <label>LCE1F</label>
    </interactant>
    <organismsDiffer>false</organismsDiffer>
    <experiments>3</experiments>
</comment>
<comment type="interaction">
    <interactant intactId="EBI-1051105">
        <id>Q92504</id>
    </interactant>
    <interactant intactId="EBI-11973993">
        <id>Q5TA81</id>
        <label>LCE2C</label>
    </interactant>
    <organismsDiffer>false</organismsDiffer>
    <experiments>3</experiments>
</comment>
<comment type="interaction">
    <interactant intactId="EBI-1051105">
        <id>Q92504</id>
    </interactant>
    <interactant intactId="EBI-10246750">
        <id>Q5TA82</id>
        <label>LCE2D</label>
    </interactant>
    <organismsDiffer>false</organismsDiffer>
    <experiments>3</experiments>
</comment>
<comment type="interaction">
    <interactant intactId="EBI-1051105">
        <id>Q92504</id>
    </interactant>
    <interactant intactId="EBI-10246358">
        <id>Q5TA78</id>
        <label>LCE4A</label>
    </interactant>
    <organismsDiffer>false</organismsDiffer>
    <experiments>3</experiments>
</comment>
<comment type="interaction">
    <interactant intactId="EBI-1051105">
        <id>Q92504</id>
    </interactant>
    <interactant intactId="EBI-11955689">
        <id>Q5TCM9</id>
        <label>LCE5A</label>
    </interactant>
    <organismsDiffer>false</organismsDiffer>
    <experiments>3</experiments>
</comment>
<comment type="interaction">
    <interactant intactId="EBI-1051105">
        <id>Q92504</id>
    </interactant>
    <interactant intactId="EBI-18115868">
        <id>Q5T871</id>
        <label>LELP1</label>
    </interactant>
    <organismsDiffer>false</organismsDiffer>
    <experiments>3</experiments>
</comment>
<comment type="interaction">
    <interactant intactId="EBI-1051105">
        <id>Q92504</id>
    </interactant>
    <interactant intactId="EBI-3918154">
        <id>Q9UGC6</id>
        <label>RGS17</label>
    </interactant>
    <organismsDiffer>false</organismsDiffer>
    <experiments>3</experiments>
</comment>
<comment type="interaction">
    <interactant intactId="EBI-1051105">
        <id>Q92504</id>
    </interactant>
    <interactant intactId="EBI-12009390">
        <id>Q6UXX9-2</id>
        <label>RSPO2</label>
    </interactant>
    <organismsDiffer>false</organismsDiffer>
    <experiments>3</experiments>
</comment>
<comment type="interaction">
    <interactant intactId="EBI-1051105">
        <id>Q92504</id>
    </interactant>
    <interactant intactId="EBI-18037857">
        <id>Q3SXP7</id>
        <label>SHISAL1</label>
    </interactant>
    <organismsDiffer>false</organismsDiffer>
    <experiments>3</experiments>
</comment>
<comment type="interaction">
    <interactant intactId="EBI-1051105">
        <id>Q92504</id>
    </interactant>
    <interactant intactId="EBI-12811757">
        <id>O95436-2</id>
        <label>SLC34A2</label>
    </interactant>
    <organismsDiffer>false</organismsDiffer>
    <experiments>3</experiments>
</comment>
<comment type="interaction">
    <interactant intactId="EBI-1051105">
        <id>Q92504</id>
    </interactant>
    <interactant intactId="EBI-750494">
        <id>P49901</id>
        <label>SMCP</label>
    </interactant>
    <organismsDiffer>false</organismsDiffer>
    <experiments>3</experiments>
</comment>
<comment type="interaction">
    <interactant intactId="EBI-1051105">
        <id>Q92504</id>
    </interactant>
    <interactant intactId="EBI-12290641">
        <id>O43610</id>
        <label>SPRY3</label>
    </interactant>
    <organismsDiffer>false</organismsDiffer>
    <experiments>3</experiments>
</comment>
<comment type="interaction">
    <interactant intactId="EBI-1051105">
        <id>Q92504</id>
    </interactant>
    <interactant intactId="EBI-8638294">
        <id>Q9NUH8</id>
        <label>TMEM14B</label>
    </interactant>
    <organismsDiffer>false</organismsDiffer>
    <experiments>3</experiments>
</comment>
<comment type="interaction">
    <interactant intactId="EBI-1051105">
        <id>Q92504</id>
    </interactant>
    <interactant intactId="EBI-1044859">
        <id>Q9UBN6</id>
        <label>TNFRSF10D</label>
    </interactant>
    <organismsDiffer>false</organismsDiffer>
    <experiments>3</experiments>
</comment>
<comment type="interaction">
    <interactant intactId="EBI-1051105">
        <id>Q92504</id>
    </interactant>
    <interactant intactId="EBI-13356252">
        <id>Q86WB7-2</id>
        <label>UNC93A</label>
    </interactant>
    <organismsDiffer>false</organismsDiffer>
    <experiments>3</experiments>
</comment>
<comment type="interaction">
    <interactant intactId="EBI-1051105">
        <id>Q92504</id>
    </interactant>
    <interactant intactId="EBI-11958577">
        <id>Q8WWY7</id>
        <label>WFDC12</label>
    </interactant>
    <organismsDiffer>false</organismsDiffer>
    <experiments>3</experiments>
</comment>
<comment type="subcellular location">
    <subcellularLocation>
        <location evidence="4 8 9 10">Endoplasmic reticulum membrane</location>
        <topology evidence="2">Multi-pass membrane protein</topology>
    </subcellularLocation>
    <subcellularLocation>
        <location evidence="5">Golgi apparatus</location>
        <location evidence="5">cis-Golgi network membrane</location>
        <topology evidence="2">Multi-pass membrane protein</topology>
    </subcellularLocation>
</comment>
<comment type="tissue specificity">
    <text evidence="4 5">Widely expressed.</text>
</comment>
<comment type="induction">
    <text evidence="5">Down-regulated by Zn(+2).</text>
</comment>
<comment type="PTM">
    <text evidence="6 7">Rapidly phosphorylated by CK2 following Zn(2+) treatment. This phosphorylation is required for efficient cytosolic Zn(2+) release.</text>
</comment>
<comment type="PTM">
    <text evidence="11 13">Methylation at some His residue by METTL9 leads to reduced zinc-binding.</text>
</comment>
<comment type="disease" evidence="10">
    <disease id="DI-06309">
        <name>Agammaglobulinemia 9, autosomal recessive</name>
        <acronym>AGM9</acronym>
        <description>A form of agammaglobulinemia, a primary immunodeficiency characterized by profoundly low or absent serum antibodies and low or absent circulating B-cells due to an early block of B-cell development. Affected individuals develop severe infections in the first years of life.</description>
        <dbReference type="MIM" id="619693"/>
    </disease>
    <text>The disease is caused by variants affecting the gene represented in this entry.</text>
</comment>
<comment type="similarity">
    <text evidence="18">Belongs to the ZIP transporter (TC 2.A.5) family. KE4/Catsup subfamily.</text>
</comment>
<evidence type="ECO:0000250" key="1">
    <source>
        <dbReference type="UniProtKB" id="Q31125"/>
    </source>
</evidence>
<evidence type="ECO:0000255" key="2"/>
<evidence type="ECO:0000256" key="3">
    <source>
        <dbReference type="SAM" id="MobiDB-lite"/>
    </source>
</evidence>
<evidence type="ECO:0000269" key="4">
    <source>
    </source>
</evidence>
<evidence type="ECO:0000269" key="5">
    <source>
    </source>
</evidence>
<evidence type="ECO:0000269" key="6">
    <source>
    </source>
</evidence>
<evidence type="ECO:0000269" key="7">
    <source>
    </source>
</evidence>
<evidence type="ECO:0000269" key="8">
    <source>
    </source>
</evidence>
<evidence type="ECO:0000269" key="9">
    <source>
    </source>
</evidence>
<evidence type="ECO:0000269" key="10">
    <source>
    </source>
</evidence>
<evidence type="ECO:0000269" key="11">
    <source>
    </source>
</evidence>
<evidence type="ECO:0000269" key="12">
    <source>
    </source>
</evidence>
<evidence type="ECO:0000269" key="13">
    <source>
    </source>
</evidence>
<evidence type="ECO:0000269" key="14">
    <source>
    </source>
</evidence>
<evidence type="ECO:0000269" key="15">
    <source ref="2"/>
</evidence>
<evidence type="ECO:0000303" key="16">
    <source>
    </source>
</evidence>
<evidence type="ECO:0000303" key="17">
    <source>
    </source>
</evidence>
<evidence type="ECO:0000305" key="18"/>
<evidence type="ECO:0007744" key="19">
    <source>
        <dbReference type="PDB" id="8GZE"/>
    </source>
</evidence>
<evidence type="ECO:0007744" key="20">
    <source>
    </source>
</evidence>
<proteinExistence type="evidence at protein level"/>
<gene>
    <name type="primary">SLC39A7</name>
    <name evidence="16" type="synonym">HKE4</name>
    <name type="synonym">RING5</name>
</gene>
<sequence>MARGLGAPHWVAVGLLTWATLGLLVAGLGGHDDLHDDLQEDFHGHSHRHSHEDFHHGHSHAHGHGHTHESIWHGHTHDHDHGHSHEDLHHGHSHGYSHESLYHRGHGHDHEHSHGGYGESGAPGIKQDLDAVTLWAYALGATVLISAAPFFVLFLIPVESNSPRHRSLLQILLSFASGGLLGDAFLHLIPHALEPHSHHTLEQPGHGHSHSGQGPILSVGLWVLSGIVAFLVVEKFVRHVKGGHGHSHGHGHAHSHTRGSHGHGRQERSTKEKQSSEEEEKETRGVQKRRGGSTVPKDGPVRPQNAEEEKRGLDLRVSGYLNLAADLAHNFTDGLAIGASFRGGRGLGILTTMTVLLHEVPHEVGDFAILVQSGCSKKQAMRLQLLTAVGALAGTACALLTEGGAVGSEIAGGAGPGWVLPFTAGGFIYVATVSVLPELLREASPLQSLLEVLGLLGGVIMMVLIAHLE</sequence>
<accession>Q92504</accession>
<accession>B0UXF6</accession>
<accession>Q5STP8</accession>
<accession>Q9UIQ0</accession>
<keyword id="KW-0002">3D-structure</keyword>
<keyword id="KW-0225">Disease variant</keyword>
<keyword id="KW-0256">Endoplasmic reticulum</keyword>
<keyword id="KW-0333">Golgi apparatus</keyword>
<keyword id="KW-0406">Ion transport</keyword>
<keyword id="KW-0472">Membrane</keyword>
<keyword id="KW-0488">Methylation</keyword>
<keyword id="KW-0597">Phosphoprotein</keyword>
<keyword id="KW-1267">Proteomics identification</keyword>
<keyword id="KW-1185">Reference proteome</keyword>
<keyword id="KW-0812">Transmembrane</keyword>
<keyword id="KW-1133">Transmembrane helix</keyword>
<keyword id="KW-0813">Transport</keyword>
<keyword id="KW-0862">Zinc</keyword>
<keyword id="KW-0864">Zinc transport</keyword>
<name>S39A7_HUMAN</name>
<protein>
    <recommendedName>
        <fullName>Zinc transporter SLC39A7</fullName>
    </recommendedName>
    <alternativeName>
        <fullName evidence="16">Histidine-rich membrane protein Ke4</fullName>
    </alternativeName>
    <alternativeName>
        <fullName>Really interesting new gene 5 protein</fullName>
    </alternativeName>
    <alternativeName>
        <fullName>Solute carrier family 39 member 7</fullName>
    </alternativeName>
    <alternativeName>
        <fullName evidence="17">Zrt-, Irt-like protein 7</fullName>
        <shortName evidence="17">ZIP7</shortName>
    </alternativeName>
</protein>